<organism evidence="6">
    <name type="scientific">Caenorhabditis elegans</name>
    <dbReference type="NCBI Taxonomy" id="6239"/>
    <lineage>
        <taxon>Eukaryota</taxon>
        <taxon>Metazoa</taxon>
        <taxon>Ecdysozoa</taxon>
        <taxon>Nematoda</taxon>
        <taxon>Chromadorea</taxon>
        <taxon>Rhabditida</taxon>
        <taxon>Rhabditina</taxon>
        <taxon>Rhabditomorpha</taxon>
        <taxon>Rhabditoidea</taxon>
        <taxon>Rhabditidae</taxon>
        <taxon>Peloderinae</taxon>
        <taxon>Caenorhabditis</taxon>
    </lineage>
</organism>
<reference evidence="6" key="1">
    <citation type="journal article" date="1998" name="Science">
        <title>Genome sequence of the nematode C. elegans: a platform for investigating biology.</title>
        <authorList>
            <consortium name="The C. elegans sequencing consortium"/>
        </authorList>
    </citation>
    <scope>NUCLEOTIDE SEQUENCE [LARGE SCALE GENOMIC DNA]</scope>
    <source>
        <strain evidence="6">Bristol N2</strain>
    </source>
</reference>
<reference evidence="5" key="2">
    <citation type="journal article" date="2006" name="Proc. Natl. Acad. Sci. U.S.A.">
        <title>The C2H2 zinc-finger protein SYD-9 is a putative posttranscriptional regulator for synaptic transmission.</title>
        <authorList>
            <person name="Wang Y."/>
            <person name="Gracheva E.O."/>
            <person name="Richmond J."/>
            <person name="Kawano T."/>
            <person name="Couto J.M."/>
            <person name="Calarco J.A."/>
            <person name="Vijayaratnam V."/>
            <person name="Jin Y."/>
            <person name="Zhen M."/>
        </authorList>
    </citation>
    <scope>FUNCTION</scope>
    <scope>SUBCELLULAR LOCATION</scope>
    <scope>TISSUE SPECIFICITY</scope>
    <scope>DISRUPTION PHENOTYPE</scope>
</reference>
<name>SYD9_CAEEL</name>
<accession>A0A5E4M3Q4</accession>
<accession>A0A5E4LWX4</accession>
<accession>Q95PV3</accession>
<accession>Q95PV5</accession>
<accession>Q95PV6</accession>
<proteinExistence type="evidence at protein level"/>
<protein>
    <recommendedName>
        <fullName evidence="5">Zinc finger protein syd-9</fullName>
    </recommendedName>
    <alternativeName>
        <fullName evidence="11">Synapse defective protein 9</fullName>
    </alternativeName>
</protein>
<sequence>MSVCVSPLVQATILMTEESLTCPQCPKSFSSTKLLQQHQQMFHTDKSVLLSLKSTDAPVGMDRAFICETCGKAFRFRSNLAEHRSVHTALKPYVCKFCGKSSRLKGNLTKHILKHHKKEQNEAIAKDDIIVKKAPKIVTKDNGPTTNGSTPTTSTATPSVITVSSALASSNGHNNNNNNHAVNNNLRTIKMELEDPDYNLIAKSAPTPVVSKIVATHTVTPRSRPTPKDIKEILETIAPSVGVSETPEEMCLLPKDASSESDRSVLISLGFDFGSTLSLNHQQLQQVVRELKGELSISPDTVQSDHSDDFEQDSPPPMAIANISTVGGEATLAAMIVAATNASGQRGDGTPDSTDTQKGCSPQRELSPESDPSTSSGDSCPSPPKMLHCKECGTLVRKSSHLPIHMTMSHGYPPPLVAAPVEEKPAPEQPVNASSLHNELRVISNAICELKAQQAATPRVEQALTYIDSRVGKLERSLETALNSIYTLVQLQTGMTSSVNRLREDSTKNFSDLKTRMEMSLSPIKPFQQRFSRERSSSSSVERSPSRERSRSPL</sequence>
<comment type="function">
    <text evidence="3 4">Plays a role in regulating synaptic function, probably by modulation of endocytosis (PubMed:16803962). May be dispensable in muscle for normal locomotion (PubMed:16803962). May be involved in post-transcriptional mRNA processing, in parallel with unc-75 (PubMed:16803962).</text>
</comment>
<comment type="interaction">
    <interactant intactId="EBI-329613">
        <id>A0A5E4M3Q4</id>
    </interactant>
    <interactant intactId="EBI-316939">
        <id>Q9U2R6</id>
        <label>nhr-91</label>
    </interactant>
    <organismsDiffer>false</organismsDiffer>
    <experiments>4</experiments>
</comment>
<comment type="subcellular location">
    <subcellularLocation>
        <location evidence="3">Nucleus</location>
    </subcellularLocation>
    <subcellularLocation>
        <location evidence="3">Nucleus speckle</location>
    </subcellularLocation>
</comment>
<comment type="alternative products">
    <event type="alternative splicing"/>
    <isoform>
        <id>A0A5E4M3Q4-1</id>
        <name evidence="11">f</name>
        <sequence type="displayed"/>
    </isoform>
    <isoform>
        <id>A0A5E4M3Q4-2</id>
        <name evidence="7">b</name>
        <sequence type="described" ref="VSP_061149 VSP_061151"/>
    </isoform>
    <isoform>
        <id>A0A5E4M3Q4-3</id>
        <name evidence="8">c</name>
        <sequence type="described" ref="VSP_061150"/>
    </isoform>
    <isoform>
        <id>A0A5E4M3Q4-4</id>
        <name evidence="9">d</name>
        <sequence type="described" ref="VSP_061151"/>
    </isoform>
    <isoform>
        <id>A0A5E4M3Q4-5</id>
        <name evidence="10">e</name>
        <sequence type="described" ref="VSP_061150 VSP_061151"/>
    </isoform>
</comment>
<comment type="tissue specificity">
    <text evidence="3">Expressed mainly in body wall muscles and ventral cord motoneurons.</text>
</comment>
<comment type="disruption phenotype">
    <text evidence="3">RNAi-mediated knockdown, on an RNAi-sensitized rrf-3 genetic background, causes sluggish movement, abnormal morphology and low brood size, whereas when RNAi is targeted mainly at muscle, animals move normally and have healthy body morphology.</text>
</comment>
<gene>
    <name evidence="11" type="primary">syd-9</name>
    <name evidence="11" type="synonym">tag-239</name>
    <name evidence="11" type="synonym">ztf-10</name>
    <name evidence="11" type="ORF">ZK867.1</name>
</gene>
<evidence type="ECO:0000255" key="1">
    <source>
        <dbReference type="PROSITE-ProRule" id="PRU00042"/>
    </source>
</evidence>
<evidence type="ECO:0000256" key="2">
    <source>
        <dbReference type="SAM" id="MobiDB-lite"/>
    </source>
</evidence>
<evidence type="ECO:0000269" key="3">
    <source>
    </source>
</evidence>
<evidence type="ECO:0000303" key="4">
    <source>
    </source>
</evidence>
<evidence type="ECO:0000305" key="5"/>
<evidence type="ECO:0000312" key="6">
    <source>
        <dbReference type="Proteomes" id="UP000001940"/>
    </source>
</evidence>
<evidence type="ECO:0000312" key="7">
    <source>
        <dbReference type="WormBase" id="ZK867.1b"/>
    </source>
</evidence>
<evidence type="ECO:0000312" key="8">
    <source>
        <dbReference type="WormBase" id="ZK867.1c"/>
    </source>
</evidence>
<evidence type="ECO:0000312" key="9">
    <source>
        <dbReference type="WormBase" id="ZK867.1d"/>
    </source>
</evidence>
<evidence type="ECO:0000312" key="10">
    <source>
        <dbReference type="WormBase" id="ZK867.1e"/>
    </source>
</evidence>
<evidence type="ECO:0000312" key="11">
    <source>
        <dbReference type="WormBase" id="ZK867.1f"/>
    </source>
</evidence>
<feature type="chain" id="PRO_0000453460" description="Zinc finger protein syd-9">
    <location>
        <begin position="1"/>
        <end position="554"/>
    </location>
</feature>
<feature type="zinc finger region" description="C2H2-type 1" evidence="1">
    <location>
        <begin position="20"/>
        <end position="43"/>
    </location>
</feature>
<feature type="zinc finger region" description="C2H2-type 2" evidence="1">
    <location>
        <begin position="65"/>
        <end position="87"/>
    </location>
</feature>
<feature type="zinc finger region" description="C2H2-type 3" evidence="1">
    <location>
        <begin position="93"/>
        <end position="116"/>
    </location>
</feature>
<feature type="zinc finger region" description="C2H2-type 4" evidence="1">
    <location>
        <begin position="387"/>
        <end position="410"/>
    </location>
</feature>
<feature type="region of interest" description="Disordered" evidence="2">
    <location>
        <begin position="136"/>
        <end position="158"/>
    </location>
</feature>
<feature type="region of interest" description="Disordered" evidence="2">
    <location>
        <begin position="298"/>
        <end position="319"/>
    </location>
</feature>
<feature type="region of interest" description="Disordered" evidence="2">
    <location>
        <begin position="342"/>
        <end position="383"/>
    </location>
</feature>
<feature type="region of interest" description="Disordered" evidence="2">
    <location>
        <begin position="516"/>
        <end position="554"/>
    </location>
</feature>
<feature type="compositionally biased region" description="Low complexity" evidence="2">
    <location>
        <begin position="142"/>
        <end position="158"/>
    </location>
</feature>
<feature type="compositionally biased region" description="Polar residues" evidence="2">
    <location>
        <begin position="351"/>
        <end position="360"/>
    </location>
</feature>
<feature type="compositionally biased region" description="Polar residues" evidence="2">
    <location>
        <begin position="370"/>
        <end position="379"/>
    </location>
</feature>
<feature type="compositionally biased region" description="Basic and acidic residues" evidence="2">
    <location>
        <begin position="544"/>
        <end position="554"/>
    </location>
</feature>
<feature type="splice variant" id="VSP_061149" description="In isoform b." evidence="5">
    <location>
        <begin position="1"/>
        <end position="317"/>
    </location>
</feature>
<feature type="splice variant" id="VSP_061150" description="In isoform c and isoform e." evidence="5">
    <location>
        <begin position="47"/>
        <end position="63"/>
    </location>
</feature>
<feature type="splice variant" id="VSP_061151" description="In isoform b, isoform d and isoform e." evidence="5">
    <original>ELKAQQAATPRVEQALTYIDSRVGKLERSLETALNSIYTLVQLQTGMTSSVNRLREDSTKNFSDLKTRMEMSLSPIKPFQQRFSRERSSSSSVERSPSRERSRSPL</original>
    <variation>TNVY</variation>
    <location>
        <begin position="449"/>
        <end position="554"/>
    </location>
</feature>
<dbReference type="EMBL" id="BX284606">
    <property type="protein sequence ID" value="CCD68083.1"/>
    <property type="molecule type" value="Genomic_DNA"/>
</dbReference>
<dbReference type="EMBL" id="BX284606">
    <property type="protein sequence ID" value="CCD68084.1"/>
    <property type="molecule type" value="Genomic_DNA"/>
</dbReference>
<dbReference type="EMBL" id="BX284606">
    <property type="protein sequence ID" value="CCD68085.1"/>
    <property type="molecule type" value="Genomic_DNA"/>
</dbReference>
<dbReference type="EMBL" id="BX284606">
    <property type="protein sequence ID" value="VVC12416.1"/>
    <property type="molecule type" value="Genomic_DNA"/>
</dbReference>
<dbReference type="EMBL" id="BX284606">
    <property type="protein sequence ID" value="VVC12417.1"/>
    <property type="molecule type" value="Genomic_DNA"/>
</dbReference>
<dbReference type="RefSeq" id="NP_001362161.1">
    <molecule id="A0A5E4M3Q4-5"/>
    <property type="nucleotide sequence ID" value="NM_001375061.2"/>
</dbReference>
<dbReference type="RefSeq" id="NP_001362162.1">
    <molecule id="A0A5E4M3Q4-1"/>
    <property type="nucleotide sequence ID" value="NM_001375059.1"/>
</dbReference>
<dbReference type="RefSeq" id="NP_001379833.1">
    <molecule id="A0A5E4M3Q4-2"/>
    <property type="nucleotide sequence ID" value="NM_001392799.1"/>
</dbReference>
<dbReference type="RefSeq" id="NP_509213.1">
    <molecule id="A0A5E4M3Q4-4"/>
    <property type="nucleotide sequence ID" value="NM_076812.7"/>
</dbReference>
<dbReference type="RefSeq" id="NP_509214.2">
    <molecule id="A0A5E4M3Q4-3"/>
    <property type="nucleotide sequence ID" value="NM_076813.8"/>
</dbReference>
<dbReference type="RefSeq" id="NP_509216.1">
    <property type="nucleotide sequence ID" value="NM_076815.4"/>
</dbReference>
<dbReference type="FunCoup" id="A0A5E4M3Q4">
    <property type="interactions" value="306"/>
</dbReference>
<dbReference type="IntAct" id="A0A5E4M3Q4">
    <property type="interactions" value="4"/>
</dbReference>
<dbReference type="STRING" id="6239.ZK867.1c.1"/>
<dbReference type="PaxDb" id="6239-ZK867.1c"/>
<dbReference type="EnsemblMetazoa" id="ZK867.1b.1">
    <molecule id="A0A5E4M3Q4-2"/>
    <property type="protein sequence ID" value="ZK867.1b.1"/>
    <property type="gene ID" value="WBGene00044068"/>
</dbReference>
<dbReference type="EnsemblMetazoa" id="ZK867.1b.2">
    <molecule id="A0A5E4M3Q4-2"/>
    <property type="protein sequence ID" value="ZK867.1b.2"/>
    <property type="gene ID" value="WBGene00044068"/>
</dbReference>
<dbReference type="EnsemblMetazoa" id="ZK867.1b.3">
    <molecule id="A0A5E4M3Q4-2"/>
    <property type="protein sequence ID" value="ZK867.1b.3"/>
    <property type="gene ID" value="WBGene00044068"/>
</dbReference>
<dbReference type="EnsemblMetazoa" id="ZK867.1b.4">
    <molecule id="A0A5E4M3Q4-2"/>
    <property type="protein sequence ID" value="ZK867.1b.4"/>
    <property type="gene ID" value="WBGene00044068"/>
</dbReference>
<dbReference type="EnsemblMetazoa" id="ZK867.1c.1">
    <molecule id="A0A5E4M3Q4-3"/>
    <property type="protein sequence ID" value="ZK867.1c.1"/>
    <property type="gene ID" value="WBGene00044068"/>
</dbReference>
<dbReference type="EnsemblMetazoa" id="ZK867.1d.1">
    <molecule id="A0A5E4M3Q4-4"/>
    <property type="protein sequence ID" value="ZK867.1d.1"/>
    <property type="gene ID" value="WBGene00044068"/>
</dbReference>
<dbReference type="EnsemblMetazoa" id="ZK867.1e.1">
    <molecule id="A0A5E4M3Q4-5"/>
    <property type="protein sequence ID" value="ZK867.1e.1"/>
    <property type="gene ID" value="WBGene00044068"/>
</dbReference>
<dbReference type="EnsemblMetazoa" id="ZK867.1f.1">
    <molecule id="A0A5E4M3Q4-1"/>
    <property type="protein sequence ID" value="ZK867.1f.1"/>
    <property type="gene ID" value="WBGene00044068"/>
</dbReference>
<dbReference type="GeneID" id="180985"/>
<dbReference type="KEGG" id="cel:CELE_ZK867.1"/>
<dbReference type="UCSC" id="ZK867.1c">
    <property type="organism name" value="c. elegans"/>
</dbReference>
<dbReference type="AGR" id="WB:WBGene00044068"/>
<dbReference type="CTD" id="180985"/>
<dbReference type="WormBase" id="ZK867.1b">
    <molecule id="A0A5E4M3Q4-2"/>
    <property type="protein sequence ID" value="CE28198"/>
    <property type="gene ID" value="WBGene00044068"/>
    <property type="gene designation" value="syd-9"/>
</dbReference>
<dbReference type="WormBase" id="ZK867.1c">
    <molecule id="A0A5E4M3Q4-3"/>
    <property type="protein sequence ID" value="CE35819"/>
    <property type="gene ID" value="WBGene00044068"/>
    <property type="gene designation" value="syd-9"/>
</dbReference>
<dbReference type="WormBase" id="ZK867.1d">
    <molecule id="A0A5E4M3Q4-4"/>
    <property type="protein sequence ID" value="CE29653"/>
    <property type="gene ID" value="WBGene00044068"/>
    <property type="gene designation" value="syd-9"/>
</dbReference>
<dbReference type="WormBase" id="ZK867.1e">
    <molecule id="A0A5E4M3Q4-5"/>
    <property type="protein sequence ID" value="CE28199"/>
    <property type="gene ID" value="WBGene00044068"/>
    <property type="gene designation" value="syd-9"/>
</dbReference>
<dbReference type="WormBase" id="ZK867.1f">
    <molecule id="A0A5E4M3Q4-1"/>
    <property type="protein sequence ID" value="CE53637"/>
    <property type="gene ID" value="WBGene00044068"/>
    <property type="gene designation" value="syd-9"/>
</dbReference>
<dbReference type="eggNOG" id="KOG1721">
    <property type="taxonomic scope" value="Eukaryota"/>
</dbReference>
<dbReference type="GeneTree" id="ENSGT01060000253493"/>
<dbReference type="HOGENOM" id="CLU_1887607_0_0_1"/>
<dbReference type="InParanoid" id="A0A5E4M3Q4"/>
<dbReference type="OMA" id="NSHAINN"/>
<dbReference type="OrthoDB" id="9439903at2759"/>
<dbReference type="PRO" id="PR:A0A5E4M3Q4"/>
<dbReference type="Proteomes" id="UP000001940">
    <property type="component" value="Chromosome X"/>
</dbReference>
<dbReference type="Bgee" id="WBGene00044068">
    <property type="expression patterns" value="Expressed in pharyngeal muscle cell (C elegans) and 3 other cell types or tissues"/>
</dbReference>
<dbReference type="ExpressionAtlas" id="A0A5E4M3Q4">
    <property type="expression patterns" value="baseline and differential"/>
</dbReference>
<dbReference type="GO" id="GO:0016607">
    <property type="term" value="C:nuclear speck"/>
    <property type="evidence" value="ECO:0000314"/>
    <property type="project" value="WormBase"/>
</dbReference>
<dbReference type="GO" id="GO:0005634">
    <property type="term" value="C:nucleus"/>
    <property type="evidence" value="ECO:0000318"/>
    <property type="project" value="GO_Central"/>
</dbReference>
<dbReference type="GO" id="GO:0000981">
    <property type="term" value="F:DNA-binding transcription factor activity, RNA polymerase II-specific"/>
    <property type="evidence" value="ECO:0000318"/>
    <property type="project" value="GO_Central"/>
</dbReference>
<dbReference type="GO" id="GO:0000977">
    <property type="term" value="F:RNA polymerase II transcription regulatory region sequence-specific DNA binding"/>
    <property type="evidence" value="ECO:0000318"/>
    <property type="project" value="GO_Central"/>
</dbReference>
<dbReference type="GO" id="GO:0008270">
    <property type="term" value="F:zinc ion binding"/>
    <property type="evidence" value="ECO:0007669"/>
    <property type="project" value="UniProtKB-KW"/>
</dbReference>
<dbReference type="GO" id="GO:0006357">
    <property type="term" value="P:regulation of transcription by RNA polymerase II"/>
    <property type="evidence" value="ECO:0000318"/>
    <property type="project" value="GO_Central"/>
</dbReference>
<dbReference type="FunFam" id="3.30.160.60:FF:002484">
    <property type="entry name" value="Protein CBR-LSY-2"/>
    <property type="match status" value="1"/>
</dbReference>
<dbReference type="Gene3D" id="3.30.160.60">
    <property type="entry name" value="Classic Zinc Finger"/>
    <property type="match status" value="3"/>
</dbReference>
<dbReference type="InterPro" id="IPR050888">
    <property type="entry name" value="ZnF_C2H2-type_TF"/>
</dbReference>
<dbReference type="InterPro" id="IPR036236">
    <property type="entry name" value="Znf_C2H2_sf"/>
</dbReference>
<dbReference type="InterPro" id="IPR013087">
    <property type="entry name" value="Znf_C2H2_type"/>
</dbReference>
<dbReference type="PANTHER" id="PTHR24406">
    <property type="entry name" value="TRANSCRIPTIONAL REPRESSOR CTCFL-RELATED"/>
    <property type="match status" value="1"/>
</dbReference>
<dbReference type="Pfam" id="PF00096">
    <property type="entry name" value="zf-C2H2"/>
    <property type="match status" value="3"/>
</dbReference>
<dbReference type="SMART" id="SM00355">
    <property type="entry name" value="ZnF_C2H2"/>
    <property type="match status" value="4"/>
</dbReference>
<dbReference type="SUPFAM" id="SSF57667">
    <property type="entry name" value="beta-beta-alpha zinc fingers"/>
    <property type="match status" value="2"/>
</dbReference>
<dbReference type="PROSITE" id="PS00028">
    <property type="entry name" value="ZINC_FINGER_C2H2_1"/>
    <property type="match status" value="3"/>
</dbReference>
<dbReference type="PROSITE" id="PS50157">
    <property type="entry name" value="ZINC_FINGER_C2H2_2"/>
    <property type="match status" value="4"/>
</dbReference>
<keyword id="KW-0025">Alternative splicing</keyword>
<keyword id="KW-0479">Metal-binding</keyword>
<keyword id="KW-0539">Nucleus</keyword>
<keyword id="KW-1185">Reference proteome</keyword>
<keyword id="KW-0677">Repeat</keyword>
<keyword id="KW-0862">Zinc</keyword>
<keyword id="KW-0863">Zinc-finger</keyword>